<accession>P9WGB7</accession>
<accession>L0T5M9</accession>
<accession>O53427</accession>
<accession>P66875</accession>
<protein>
    <recommendedName>
        <fullName>Cystathionine gamma-synthase</fullName>
        <shortName>CGS</shortName>
        <ecNumber>2.5.1.48</ecNumber>
    </recommendedName>
    <alternativeName>
        <fullName>O-succinylhomoserine (thiol)-lyase</fullName>
    </alternativeName>
</protein>
<keyword id="KW-0028">Amino-acid biosynthesis</keyword>
<keyword id="KW-0963">Cytoplasm</keyword>
<keyword id="KW-0486">Methionine biosynthesis</keyword>
<keyword id="KW-0663">Pyridoxal phosphate</keyword>
<keyword id="KW-1185">Reference proteome</keyword>
<keyword id="KW-0808">Transferase</keyword>
<sequence>MSEDRTGHQGISGPATRAIHAGYRPDPATGAVNVPIYASSTFAQDGVGGLRGGFEYARTGNPTRAALEASLAAVEEGAFARAFSSGMAATDCALRAMLRPGDHVVIPDDAYGGTFRLIDKVFTRWDVQYTPVRLADLDAVGAAITPRTRLIWVETPTNPLLSIADITAIAELGTDRSAKVLVDNTFASPALQQPLRLGADVVLHSTTKYIGGHSDVVGGALVTNDEELDEEFAFLQNGAGAVPGPFDAYLTMRGLKTLVLRMQRHSENACAVAEFLADHPSVSSVLYPGLPSHPGHEIAARQMRGFGGMVSVRMRAGRRAAQDLCAKTRVFILAESLGGVESLIEHPSAMTHASTAGSQLEVPDDLVRLSVGIEDIADLLGDLEQALG</sequence>
<reference key="1">
    <citation type="journal article" date="1998" name="Nature">
        <title>Deciphering the biology of Mycobacterium tuberculosis from the complete genome sequence.</title>
        <authorList>
            <person name="Cole S.T."/>
            <person name="Brosch R."/>
            <person name="Parkhill J."/>
            <person name="Garnier T."/>
            <person name="Churcher C.M."/>
            <person name="Harris D.E."/>
            <person name="Gordon S.V."/>
            <person name="Eiglmeier K."/>
            <person name="Gas S."/>
            <person name="Barry C.E. III"/>
            <person name="Tekaia F."/>
            <person name="Badcock K."/>
            <person name="Basham D."/>
            <person name="Brown D."/>
            <person name="Chillingworth T."/>
            <person name="Connor R."/>
            <person name="Davies R.M."/>
            <person name="Devlin K."/>
            <person name="Feltwell T."/>
            <person name="Gentles S."/>
            <person name="Hamlin N."/>
            <person name="Holroyd S."/>
            <person name="Hornsby T."/>
            <person name="Jagels K."/>
            <person name="Krogh A."/>
            <person name="McLean J."/>
            <person name="Moule S."/>
            <person name="Murphy L.D."/>
            <person name="Oliver S."/>
            <person name="Osborne J."/>
            <person name="Quail M.A."/>
            <person name="Rajandream M.A."/>
            <person name="Rogers J."/>
            <person name="Rutter S."/>
            <person name="Seeger K."/>
            <person name="Skelton S."/>
            <person name="Squares S."/>
            <person name="Squares R."/>
            <person name="Sulston J.E."/>
            <person name="Taylor K."/>
            <person name="Whitehead S."/>
            <person name="Barrell B.G."/>
        </authorList>
    </citation>
    <scope>NUCLEOTIDE SEQUENCE [LARGE SCALE GENOMIC DNA]</scope>
    <source>
        <strain>ATCC 25618 / H37Rv</strain>
    </source>
</reference>
<reference key="2">
    <citation type="journal article" date="2009" name="Int. J. Biol. Macromol.">
        <title>Molecular characterization of Mycobacterium tuberculosis cystathionine gamma synthase--apo- and holoforms.</title>
        <authorList>
            <person name="Saha B."/>
            <person name="Mukherjee S."/>
            <person name="Das A.K."/>
        </authorList>
    </citation>
    <scope>FUNCTION</scope>
    <scope>COFACTOR</scope>
    <scope>KINETIC PARAMETERS</scope>
    <scope>SUBUNIT</scope>
    <scope>3D-STRUCTURE MODELING</scope>
    <source>
        <strain>ATCC 25618 / H37Rv</strain>
    </source>
</reference>
<reference key="3">
    <citation type="journal article" date="2011" name="Mol. Cell. Proteomics">
        <title>Proteogenomic analysis of Mycobacterium tuberculosis by high resolution mass spectrometry.</title>
        <authorList>
            <person name="Kelkar D.S."/>
            <person name="Kumar D."/>
            <person name="Kumar P."/>
            <person name="Balakrishnan L."/>
            <person name="Muthusamy B."/>
            <person name="Yadav A.K."/>
            <person name="Shrivastava P."/>
            <person name="Marimuthu A."/>
            <person name="Anand S."/>
            <person name="Sundaram H."/>
            <person name="Kingsbury R."/>
            <person name="Harsha H.C."/>
            <person name="Nair B."/>
            <person name="Prasad T.S."/>
            <person name="Chauhan D.S."/>
            <person name="Katoch K."/>
            <person name="Katoch V.M."/>
            <person name="Kumar P."/>
            <person name="Chaerkady R."/>
            <person name="Ramachandran S."/>
            <person name="Dash D."/>
            <person name="Pandey A."/>
        </authorList>
    </citation>
    <scope>IDENTIFICATION BY MASS SPECTROMETRY [LARGE SCALE ANALYSIS]</scope>
    <source>
        <strain>ATCC 25618 / H37Rv</strain>
    </source>
</reference>
<proteinExistence type="evidence at protein level"/>
<name>METB_MYCTU</name>
<organism>
    <name type="scientific">Mycobacterium tuberculosis (strain ATCC 25618 / H37Rv)</name>
    <dbReference type="NCBI Taxonomy" id="83332"/>
    <lineage>
        <taxon>Bacteria</taxon>
        <taxon>Bacillati</taxon>
        <taxon>Actinomycetota</taxon>
        <taxon>Actinomycetes</taxon>
        <taxon>Mycobacteriales</taxon>
        <taxon>Mycobacteriaceae</taxon>
        <taxon>Mycobacterium</taxon>
        <taxon>Mycobacterium tuberculosis complex</taxon>
    </lineage>
</organism>
<comment type="function">
    <text evidence="1 3">Catalyzes the formation of L-cystathionine from O-succinyl-L-homoserine (OSHS) and L-cysteine, via a gamma-replacement reaction (By similarity). In the absence of thiol, catalyzes gamma-elimination to form 2-oxobutanoate, succinate and ammonia.</text>
</comment>
<comment type="catalytic activity">
    <reaction>
        <text>O-succinyl-L-homoserine + L-cysteine = L,L-cystathionine + succinate + H(+)</text>
        <dbReference type="Rhea" id="RHEA:20397"/>
        <dbReference type="ChEBI" id="CHEBI:15378"/>
        <dbReference type="ChEBI" id="CHEBI:30031"/>
        <dbReference type="ChEBI" id="CHEBI:35235"/>
        <dbReference type="ChEBI" id="CHEBI:57661"/>
        <dbReference type="ChEBI" id="CHEBI:58161"/>
        <dbReference type="EC" id="2.5.1.48"/>
    </reaction>
</comment>
<comment type="cofactor">
    <cofactor evidence="3">
        <name>pyridoxal 5'-phosphate</name>
        <dbReference type="ChEBI" id="CHEBI:597326"/>
    </cofactor>
    <text evidence="3">Binds 1 pyridoxal phosphate per subunit.</text>
</comment>
<comment type="biophysicochemical properties">
    <kinetics>
        <KM evidence="3">0.32 mM for O-succinyl-L-homoserine (at pH 7.5 and 30 degrees Celsius)</KM>
        <text>The KM value was measured when assaying the gamma-elimination reaction.</text>
    </kinetics>
</comment>
<comment type="pathway">
    <text>Amino-acid biosynthesis; L-methionine biosynthesis via de novo pathway; L-cystathionine from O-succinyl-L-homoserine: step 1/1.</text>
</comment>
<comment type="subunit">
    <text evidence="3">Homotetramer.</text>
</comment>
<comment type="subcellular location">
    <subcellularLocation>
        <location evidence="1">Cytoplasm</location>
    </subcellularLocation>
</comment>
<comment type="similarity">
    <text evidence="4">Belongs to the trans-sulfuration enzymes family.</text>
</comment>
<dbReference type="EC" id="2.5.1.48"/>
<dbReference type="EMBL" id="AL123456">
    <property type="protein sequence ID" value="CCP43830.1"/>
    <property type="molecule type" value="Genomic_DNA"/>
</dbReference>
<dbReference type="PIR" id="E70894">
    <property type="entry name" value="E70894"/>
</dbReference>
<dbReference type="RefSeq" id="NP_215595.1">
    <property type="nucleotide sequence ID" value="NC_000962.3"/>
</dbReference>
<dbReference type="RefSeq" id="WP_003405736.1">
    <property type="nucleotide sequence ID" value="NZ_NVQJ01000080.1"/>
</dbReference>
<dbReference type="SMR" id="P9WGB7"/>
<dbReference type="FunCoup" id="P9WGB7">
    <property type="interactions" value="392"/>
</dbReference>
<dbReference type="STRING" id="83332.Rv1079"/>
<dbReference type="PaxDb" id="83332-Rv1079"/>
<dbReference type="DNASU" id="887103"/>
<dbReference type="GeneID" id="887103"/>
<dbReference type="KEGG" id="mtu:Rv1079"/>
<dbReference type="KEGG" id="mtv:RVBD_1079"/>
<dbReference type="TubercuList" id="Rv1079"/>
<dbReference type="eggNOG" id="COG0626">
    <property type="taxonomic scope" value="Bacteria"/>
</dbReference>
<dbReference type="InParanoid" id="P9WGB7"/>
<dbReference type="OrthoDB" id="9780685at2"/>
<dbReference type="PhylomeDB" id="P9WGB7"/>
<dbReference type="Reactome" id="R-MTU-937250">
    <property type="pathway name" value="Sulfur amino acid metabolism"/>
</dbReference>
<dbReference type="UniPathway" id="UPA00051">
    <property type="reaction ID" value="UER00077"/>
</dbReference>
<dbReference type="Proteomes" id="UP000001584">
    <property type="component" value="Chromosome"/>
</dbReference>
<dbReference type="GO" id="GO:0005737">
    <property type="term" value="C:cytoplasm"/>
    <property type="evidence" value="ECO:0000318"/>
    <property type="project" value="GO_Central"/>
</dbReference>
<dbReference type="GO" id="GO:0005829">
    <property type="term" value="C:cytosol"/>
    <property type="evidence" value="ECO:0000304"/>
    <property type="project" value="Reactome"/>
</dbReference>
<dbReference type="GO" id="GO:0005886">
    <property type="term" value="C:plasma membrane"/>
    <property type="evidence" value="ECO:0007005"/>
    <property type="project" value="MTBBASE"/>
</dbReference>
<dbReference type="GO" id="GO:0004123">
    <property type="term" value="F:cystathionine gamma-lyase activity"/>
    <property type="evidence" value="ECO:0000314"/>
    <property type="project" value="MTBBASE"/>
</dbReference>
<dbReference type="GO" id="GO:0003962">
    <property type="term" value="F:cystathionine gamma-synthase activity"/>
    <property type="evidence" value="ECO:0000314"/>
    <property type="project" value="MTBBASE"/>
</dbReference>
<dbReference type="GO" id="GO:0030170">
    <property type="term" value="F:pyridoxal phosphate binding"/>
    <property type="evidence" value="ECO:0000318"/>
    <property type="project" value="GO_Central"/>
</dbReference>
<dbReference type="GO" id="GO:0019343">
    <property type="term" value="P:cysteine biosynthetic process via cystathionine"/>
    <property type="evidence" value="ECO:0000315"/>
    <property type="project" value="MTBBASE"/>
</dbReference>
<dbReference type="GO" id="GO:0019279">
    <property type="term" value="P:L-methionine biosynthetic process from L-homoserine via cystathionine"/>
    <property type="evidence" value="ECO:0000315"/>
    <property type="project" value="MTBBASE"/>
</dbReference>
<dbReference type="GO" id="GO:0019346">
    <property type="term" value="P:transsulfuration"/>
    <property type="evidence" value="ECO:0000318"/>
    <property type="project" value="GO_Central"/>
</dbReference>
<dbReference type="CDD" id="cd00614">
    <property type="entry name" value="CGS_like"/>
    <property type="match status" value="1"/>
</dbReference>
<dbReference type="FunFam" id="3.90.1150.10:FF:000008">
    <property type="entry name" value="Cystathionine gamma-synthase"/>
    <property type="match status" value="1"/>
</dbReference>
<dbReference type="FunFam" id="3.40.640.10:FF:000009">
    <property type="entry name" value="Cystathionine gamma-synthase homolog"/>
    <property type="match status" value="1"/>
</dbReference>
<dbReference type="Gene3D" id="3.90.1150.10">
    <property type="entry name" value="Aspartate Aminotransferase, domain 1"/>
    <property type="match status" value="1"/>
</dbReference>
<dbReference type="Gene3D" id="3.40.640.10">
    <property type="entry name" value="Type I PLP-dependent aspartate aminotransferase-like (Major domain)"/>
    <property type="match status" value="1"/>
</dbReference>
<dbReference type="InterPro" id="IPR000277">
    <property type="entry name" value="Cys/Met-Metab_PyrdxlP-dep_enz"/>
</dbReference>
<dbReference type="InterPro" id="IPR054542">
    <property type="entry name" value="Cys_met_metab_PP"/>
</dbReference>
<dbReference type="InterPro" id="IPR015424">
    <property type="entry name" value="PyrdxlP-dep_Trfase"/>
</dbReference>
<dbReference type="InterPro" id="IPR015421">
    <property type="entry name" value="PyrdxlP-dep_Trfase_major"/>
</dbReference>
<dbReference type="InterPro" id="IPR015422">
    <property type="entry name" value="PyrdxlP-dep_Trfase_small"/>
</dbReference>
<dbReference type="NCBIfam" id="NF005871">
    <property type="entry name" value="PRK07811.1"/>
    <property type="match status" value="1"/>
</dbReference>
<dbReference type="PANTHER" id="PTHR11808:SF15">
    <property type="entry name" value="CYSTATHIONINE GAMMA-LYASE"/>
    <property type="match status" value="1"/>
</dbReference>
<dbReference type="PANTHER" id="PTHR11808">
    <property type="entry name" value="TRANS-SULFURATION ENZYME FAMILY MEMBER"/>
    <property type="match status" value="1"/>
</dbReference>
<dbReference type="Pfam" id="PF01053">
    <property type="entry name" value="Cys_Met_Meta_PP"/>
    <property type="match status" value="1"/>
</dbReference>
<dbReference type="PIRSF" id="PIRSF001434">
    <property type="entry name" value="CGS"/>
    <property type="match status" value="1"/>
</dbReference>
<dbReference type="SUPFAM" id="SSF53383">
    <property type="entry name" value="PLP-dependent transferases"/>
    <property type="match status" value="1"/>
</dbReference>
<dbReference type="PROSITE" id="PS00868">
    <property type="entry name" value="CYS_MET_METAB_PP"/>
    <property type="match status" value="1"/>
</dbReference>
<evidence type="ECO:0000250" key="1"/>
<evidence type="ECO:0000256" key="2">
    <source>
        <dbReference type="SAM" id="MobiDB-lite"/>
    </source>
</evidence>
<evidence type="ECO:0000269" key="3">
    <source>
    </source>
</evidence>
<evidence type="ECO:0000305" key="4"/>
<feature type="chain" id="PRO_0000114762" description="Cystathionine gamma-synthase">
    <location>
        <begin position="1"/>
        <end position="388"/>
    </location>
</feature>
<feature type="region of interest" description="Disordered" evidence="2">
    <location>
        <begin position="1"/>
        <end position="24"/>
    </location>
</feature>
<feature type="modified residue" description="N6-(pyridoxal phosphate)lysine" evidence="4">
    <location>
        <position position="208"/>
    </location>
</feature>
<gene>
    <name type="primary">metB</name>
    <name type="ordered locus">Rv1079</name>
    <name type="ORF">MTV017.32</name>
</gene>